<dbReference type="EC" id="1.14.13.-" evidence="2"/>
<dbReference type="EMBL" id="KF319017">
    <property type="protein sequence ID" value="AGY78320.1"/>
    <property type="molecule type" value="Genomic_DNA"/>
</dbReference>
<dbReference type="SMR" id="U5S003"/>
<dbReference type="GO" id="GO:0071949">
    <property type="term" value="F:FAD binding"/>
    <property type="evidence" value="ECO:0000314"/>
    <property type="project" value="UniProtKB"/>
</dbReference>
<dbReference type="GO" id="GO:0004499">
    <property type="term" value="F:N,N-dimethylaniline monooxygenase activity"/>
    <property type="evidence" value="ECO:0007669"/>
    <property type="project" value="InterPro"/>
</dbReference>
<dbReference type="GO" id="GO:0070402">
    <property type="term" value="F:NADPH binding"/>
    <property type="evidence" value="ECO:0000314"/>
    <property type="project" value="UniProtKB"/>
</dbReference>
<dbReference type="GO" id="GO:0016709">
    <property type="term" value="F:oxidoreductase activity, acting on paired donors, with incorporation or reduction of molecular oxygen, NAD(P)H as one donor, and incorporation of one atom of oxygen"/>
    <property type="evidence" value="ECO:0000314"/>
    <property type="project" value="UniProtKB"/>
</dbReference>
<dbReference type="FunFam" id="3.50.50.60:FF:000314">
    <property type="entry name" value="Baeyer-Villiger monooxygenase"/>
    <property type="match status" value="1"/>
</dbReference>
<dbReference type="FunFam" id="3.50.50.60:FF:000341">
    <property type="entry name" value="Baeyer-Villiger monooxygenase"/>
    <property type="match status" value="1"/>
</dbReference>
<dbReference type="Gene3D" id="3.50.50.60">
    <property type="entry name" value="FAD/NAD(P)-binding domain"/>
    <property type="match status" value="2"/>
</dbReference>
<dbReference type="InterPro" id="IPR050775">
    <property type="entry name" value="FAD-binding_Monooxygenases"/>
</dbReference>
<dbReference type="InterPro" id="IPR036188">
    <property type="entry name" value="FAD/NAD-bd_sf"/>
</dbReference>
<dbReference type="InterPro" id="IPR020946">
    <property type="entry name" value="Flavin_mOase-like"/>
</dbReference>
<dbReference type="PANTHER" id="PTHR43098:SF4">
    <property type="entry name" value="BLR3857 PROTEIN"/>
    <property type="match status" value="1"/>
</dbReference>
<dbReference type="PANTHER" id="PTHR43098">
    <property type="entry name" value="L-ORNITHINE N(5)-MONOOXYGENASE-RELATED"/>
    <property type="match status" value="1"/>
</dbReference>
<dbReference type="Pfam" id="PF00743">
    <property type="entry name" value="FMO-like"/>
    <property type="match status" value="1"/>
</dbReference>
<dbReference type="Pfam" id="PF13450">
    <property type="entry name" value="NAD_binding_8"/>
    <property type="match status" value="1"/>
</dbReference>
<dbReference type="PRINTS" id="PR00368">
    <property type="entry name" value="FADPNR"/>
</dbReference>
<dbReference type="PRINTS" id="PR00411">
    <property type="entry name" value="PNDRDTASEI"/>
</dbReference>
<dbReference type="SUPFAM" id="SSF51905">
    <property type="entry name" value="FAD/NAD(P)-binding domain"/>
    <property type="match status" value="1"/>
</dbReference>
<accession>U5S003</accession>
<comment type="function">
    <text evidence="2">Catalyzes a Baeyer-Villiger oxidation reaction, i.e. the insertion of an oxygen atom into a carbon-carbon bond adjacent to a carbonyl, which converts ketones to esters or lactones using NADPH as an electron donor. Has a broad substrate scope and oxidizes different compounds including substituted and unsubstituted alicyclic, bicyclic-, aliphatic-ketones, ketones with an aromatic moiety, and sulfides. The highest activities are measured for 2- and 3-methylcyclohexanone, phenylacetone, bicyclo[3.2.0]hept-2-en-6-one and menthone. Cannot use NADH instead of NADPH. Is not active on benzaldehyde.</text>
</comment>
<comment type="cofactor">
    <cofactor evidence="2">
        <name>FAD</name>
        <dbReference type="ChEBI" id="CHEBI:57692"/>
    </cofactor>
</comment>
<comment type="biophysicochemical properties">
    <kinetics>
        <KM evidence="2">0.829 mM for phenylacetone</KM>
        <KM evidence="2">0.507 mM for 2-methylcyclohexanone</KM>
        <KM evidence="2">0.011 mM for NADPH</KM>
        <text evidence="2">kcat is 0.634 sec(-1) with phenylacetone as substrate and 0.370 sec(-1) with 2-methylcyclohexanone as substrate.</text>
    </kinetics>
    <phDependence>
        <text evidence="2">Optimum pH is 7.5. Exhibits more than 50% of its optimal activity between pH 6.5 and 9.0. Displays highest stability in a pH range of 7.0-8.0.</text>
    </phDependence>
    <temperatureDependence>
        <text evidence="2">Optimum temperature is 35 degrees Celsius. At this temperature, its half-life is about 20 hours. Retains about 50% and 20% of its initial activity after 20 h and 48 h of incubation at 35 degrees Celsius, respectively.</text>
    </temperatureDependence>
</comment>
<comment type="similarity">
    <text evidence="4">Belongs to the FAD-binding monooxygenase family.</text>
</comment>
<sequence>MPFTLPESKIAIDIDFDPDHLRQRFEADKQARERKDQLAQFQGLDDVLEVDDSDPFSEPITREPVTEELDALVLGGGFGGLTAGAYLTQNGVENFRLVEYGGDFGGTWYWNRYPGVQCDIESHIYMPLLEETGYVPSQRYADGSEIFEHAQRIGRHYGLYDRTYFQTRATHARWDEQIQRWEVTTDRGDRFVTRVLLRSNGALTKPQLPKVPGIGDFEGKIFHTSRWDYGYTGGSAAGDLAHLRDKRVAVVGTGATGVQVVPYLAQDAKELVVVQRTPSVVQPRNNRKTDPEWVASLTPGWQYERHDNFNGIISGHEVEGNLVDDGWTHLFPELTGQHLVDVPVGELPEGDQALVAELADMNLLMSAHARVDSIVTDPATADGLKPWFGYMCKRPCFNDEYLEAFNRPNVTLAASPAGIDGITSSGIVVAGTHYEVDCIIFATGFETGSGPAGIYGYDVIGREGHSMQEYFSEGARTFHGFFTHGFPNFVELGMSQTAYYVNFVYMLDRKARHAARLVRHLLDSGIGTFEPTAEAEADWVAEVRRSNEPREAYWGACTPGYYNGQGEVSKAVFRDVYNSSEIDFWNMIEAWWNSGRFEGLVFEPARDAVPVA</sequence>
<protein>
    <recommendedName>
        <fullName evidence="3">Baeyer-Villiger monooxygenase 4</fullName>
        <shortName evidence="3">BVMO4</shortName>
        <ecNumber evidence="2">1.14.13.-</ecNumber>
    </recommendedName>
</protein>
<keyword id="KW-0274">FAD</keyword>
<keyword id="KW-0285">Flavoprotein</keyword>
<keyword id="KW-0503">Monooxygenase</keyword>
<keyword id="KW-0521">NADP</keyword>
<keyword id="KW-0560">Oxidoreductase</keyword>
<proteinExistence type="evidence at protein level"/>
<reference key="1">
    <citation type="journal article" date="2014" name="AMB Express">
        <title>Cloning, expression and characterization of a versatile Baeyer-Villiger monooxygenase from Dietzia sp. D5.</title>
        <authorList>
            <person name="Bisagni S."/>
            <person name="Hatti-Kaul R."/>
            <person name="Mamo G."/>
        </authorList>
    </citation>
    <scope>NUCLEOTIDE SEQUENCE [GENOMIC DNA]</scope>
    <scope>FUNCTION</scope>
    <scope>CATALYTIC ACTIVITY</scope>
    <scope>COFACTOR</scope>
    <scope>SUBSTRATE SPECIFICITY</scope>
    <scope>BIOPHYSICOCHEMICAL PROPERTIES</scope>
    <source>
        <strain>D5</strain>
    </source>
</reference>
<organism>
    <name type="scientific">Dietzia sp. (strain D5)</name>
    <dbReference type="NCBI Taxonomy" id="1408143"/>
    <lineage>
        <taxon>Bacteria</taxon>
        <taxon>Bacillati</taxon>
        <taxon>Actinomycetota</taxon>
        <taxon>Actinomycetes</taxon>
        <taxon>Mycobacteriales</taxon>
        <taxon>Dietziaceae</taxon>
        <taxon>Dietzia</taxon>
    </lineage>
</organism>
<evidence type="ECO:0000250" key="1">
    <source>
        <dbReference type="UniProtKB" id="Q47PU3"/>
    </source>
</evidence>
<evidence type="ECO:0000269" key="2">
    <source>
    </source>
</evidence>
<evidence type="ECO:0000303" key="3">
    <source>
    </source>
</evidence>
<evidence type="ECO:0000305" key="4"/>
<name>BVMO4_DIESD</name>
<feature type="chain" id="PRO_0000431623" description="Baeyer-Villiger monooxygenase 4">
    <location>
        <begin position="1"/>
        <end position="612"/>
    </location>
</feature>
<feature type="binding site" evidence="1">
    <location>
        <position position="99"/>
    </location>
    <ligand>
        <name>FAD</name>
        <dbReference type="ChEBI" id="CHEBI:57692"/>
    </ligand>
</feature>
<feature type="binding site" evidence="1">
    <location>
        <begin position="107"/>
        <end position="110"/>
    </location>
    <ligand>
        <name>FAD</name>
        <dbReference type="ChEBI" id="CHEBI:57692"/>
    </ligand>
</feature>
<feature type="binding site" evidence="1">
    <location>
        <begin position="117"/>
        <end position="119"/>
    </location>
    <ligand>
        <name>NADP(+)</name>
        <dbReference type="ChEBI" id="CHEBI:58349"/>
    </ligand>
</feature>
<feature type="binding site" evidence="1">
    <location>
        <position position="119"/>
    </location>
    <ligand>
        <name>FAD</name>
        <dbReference type="ChEBI" id="CHEBI:57692"/>
    </ligand>
</feature>
<feature type="binding site" evidence="1">
    <location>
        <position position="125"/>
    </location>
    <ligand>
        <name>FAD</name>
        <dbReference type="ChEBI" id="CHEBI:57692"/>
    </ligand>
</feature>
<feature type="binding site" evidence="1">
    <location>
        <position position="169"/>
    </location>
    <ligand>
        <name>FAD</name>
        <dbReference type="ChEBI" id="CHEBI:57692"/>
    </ligand>
</feature>
<feature type="binding site" evidence="1">
    <location>
        <begin position="253"/>
        <end position="259"/>
    </location>
    <ligand>
        <name>NADP(+)</name>
        <dbReference type="ChEBI" id="CHEBI:58349"/>
    </ligand>
</feature>
<feature type="binding site" evidence="1">
    <location>
        <begin position="276"/>
        <end position="277"/>
    </location>
    <ligand>
        <name>NADP(+)</name>
        <dbReference type="ChEBI" id="CHEBI:58349"/>
    </ligand>
</feature>
<feature type="binding site" evidence="1">
    <location>
        <begin position="393"/>
        <end position="394"/>
    </location>
    <ligand>
        <name>NADP(+)</name>
        <dbReference type="ChEBI" id="CHEBI:58349"/>
    </ligand>
</feature>
<feature type="site" description="Transition state stabilizer" evidence="1">
    <location>
        <position position="394"/>
    </location>
</feature>